<name>NEK9_XENLA</name>
<keyword id="KW-0067">ATP-binding</keyword>
<keyword id="KW-0131">Cell cycle</keyword>
<keyword id="KW-0132">Cell division</keyword>
<keyword id="KW-0175">Coiled coil</keyword>
<keyword id="KW-0963">Cytoplasm</keyword>
<keyword id="KW-0418">Kinase</keyword>
<keyword id="KW-0460">Magnesium</keyword>
<keyword id="KW-0479">Metal-binding</keyword>
<keyword id="KW-0498">Mitosis</keyword>
<keyword id="KW-0547">Nucleotide-binding</keyword>
<keyword id="KW-0597">Phosphoprotein</keyword>
<keyword id="KW-1185">Reference proteome</keyword>
<keyword id="KW-0677">Repeat</keyword>
<keyword id="KW-0723">Serine/threonine-protein kinase</keyword>
<keyword id="KW-0808">Transferase</keyword>
<evidence type="ECO:0000250" key="1">
    <source>
        <dbReference type="UniProtKB" id="Q8TD19"/>
    </source>
</evidence>
<evidence type="ECO:0000255" key="2"/>
<evidence type="ECO:0000255" key="3">
    <source>
        <dbReference type="PROSITE-ProRule" id="PRU00159"/>
    </source>
</evidence>
<evidence type="ECO:0000255" key="4">
    <source>
        <dbReference type="PROSITE-ProRule" id="PRU10027"/>
    </source>
</evidence>
<evidence type="ECO:0000256" key="5">
    <source>
        <dbReference type="SAM" id="MobiDB-lite"/>
    </source>
</evidence>
<evidence type="ECO:0000303" key="6">
    <source>
    </source>
</evidence>
<evidence type="ECO:0000305" key="7"/>
<gene>
    <name type="primary">nek9</name>
</gene>
<proteinExistence type="evidence at transcript level"/>
<dbReference type="EC" id="2.7.11.1" evidence="1"/>
<dbReference type="EMBL" id="AY271412">
    <property type="protein sequence ID" value="AAP31900.1"/>
    <property type="molecule type" value="mRNA"/>
</dbReference>
<dbReference type="SMR" id="Q7ZZC8"/>
<dbReference type="AGR" id="Xenbase:XB-GENE-974105"/>
<dbReference type="Xenbase" id="XB-GENE-974105">
    <property type="gene designation" value="nek9.L"/>
</dbReference>
<dbReference type="Proteomes" id="UP000186698">
    <property type="component" value="Unplaced"/>
</dbReference>
<dbReference type="GO" id="GO:0005813">
    <property type="term" value="C:centrosome"/>
    <property type="evidence" value="ECO:0007669"/>
    <property type="project" value="TreeGrafter"/>
</dbReference>
<dbReference type="GO" id="GO:0005737">
    <property type="term" value="C:cytoplasm"/>
    <property type="evidence" value="ECO:0007669"/>
    <property type="project" value="UniProtKB-SubCell"/>
</dbReference>
<dbReference type="GO" id="GO:0005524">
    <property type="term" value="F:ATP binding"/>
    <property type="evidence" value="ECO:0007669"/>
    <property type="project" value="UniProtKB-KW"/>
</dbReference>
<dbReference type="GO" id="GO:0046872">
    <property type="term" value="F:metal ion binding"/>
    <property type="evidence" value="ECO:0007669"/>
    <property type="project" value="UniProtKB-KW"/>
</dbReference>
<dbReference type="GO" id="GO:0030295">
    <property type="term" value="F:protein kinase activator activity"/>
    <property type="evidence" value="ECO:0000250"/>
    <property type="project" value="UniProtKB"/>
</dbReference>
<dbReference type="GO" id="GO:0019901">
    <property type="term" value="F:protein kinase binding"/>
    <property type="evidence" value="ECO:0000250"/>
    <property type="project" value="UniProtKB"/>
</dbReference>
<dbReference type="GO" id="GO:0106310">
    <property type="term" value="F:protein serine kinase activity"/>
    <property type="evidence" value="ECO:0007669"/>
    <property type="project" value="RHEA"/>
</dbReference>
<dbReference type="GO" id="GO:0004674">
    <property type="term" value="F:protein serine/threonine kinase activity"/>
    <property type="evidence" value="ECO:0000250"/>
    <property type="project" value="UniProtKB"/>
</dbReference>
<dbReference type="GO" id="GO:0051301">
    <property type="term" value="P:cell division"/>
    <property type="evidence" value="ECO:0007669"/>
    <property type="project" value="UniProtKB-KW"/>
</dbReference>
<dbReference type="GO" id="GO:0000278">
    <property type="term" value="P:mitotic cell cycle"/>
    <property type="evidence" value="ECO:0000250"/>
    <property type="project" value="UniProtKB"/>
</dbReference>
<dbReference type="CDD" id="cd08221">
    <property type="entry name" value="STKc_Nek9"/>
    <property type="match status" value="1"/>
</dbReference>
<dbReference type="FunFam" id="2.130.10.30:FF:000118">
    <property type="match status" value="1"/>
</dbReference>
<dbReference type="FunFam" id="3.30.200.20:FF:000097">
    <property type="entry name" value="Probable serine/threonine-protein kinase nek1"/>
    <property type="match status" value="1"/>
</dbReference>
<dbReference type="FunFam" id="1.10.510.10:FF:000602">
    <property type="entry name" value="serine/threonine-protein kinase Nek9"/>
    <property type="match status" value="1"/>
</dbReference>
<dbReference type="FunFam" id="2.130.10.30:FF:000021">
    <property type="entry name" value="serine/threonine-protein kinase Nek9 isoform X2"/>
    <property type="match status" value="1"/>
</dbReference>
<dbReference type="Gene3D" id="3.30.200.20">
    <property type="entry name" value="Phosphorylase Kinase, domain 1"/>
    <property type="match status" value="1"/>
</dbReference>
<dbReference type="Gene3D" id="2.130.10.30">
    <property type="entry name" value="Regulator of chromosome condensation 1/beta-lactamase-inhibitor protein II"/>
    <property type="match status" value="2"/>
</dbReference>
<dbReference type="Gene3D" id="1.10.510.10">
    <property type="entry name" value="Transferase(Phosphotransferase) domain 1"/>
    <property type="match status" value="1"/>
</dbReference>
<dbReference type="InterPro" id="IPR011009">
    <property type="entry name" value="Kinase-like_dom_sf"/>
</dbReference>
<dbReference type="InterPro" id="IPR042767">
    <property type="entry name" value="Nek9_STKc"/>
</dbReference>
<dbReference type="InterPro" id="IPR000719">
    <property type="entry name" value="Prot_kinase_dom"/>
</dbReference>
<dbReference type="InterPro" id="IPR009091">
    <property type="entry name" value="RCC1/BLIP-II"/>
</dbReference>
<dbReference type="InterPro" id="IPR000408">
    <property type="entry name" value="Reg_chr_condens"/>
</dbReference>
<dbReference type="InterPro" id="IPR008271">
    <property type="entry name" value="Ser/Thr_kinase_AS"/>
</dbReference>
<dbReference type="InterPro" id="IPR051997">
    <property type="entry name" value="STK_NEK"/>
</dbReference>
<dbReference type="PANTHER" id="PTHR44535">
    <property type="entry name" value="PROTEIN CBG16200"/>
    <property type="match status" value="1"/>
</dbReference>
<dbReference type="PANTHER" id="PTHR44535:SF1">
    <property type="entry name" value="SERINE_THREONINE-PROTEIN KINASE NEK9"/>
    <property type="match status" value="1"/>
</dbReference>
<dbReference type="Pfam" id="PF00069">
    <property type="entry name" value="Pkinase"/>
    <property type="match status" value="1"/>
</dbReference>
<dbReference type="Pfam" id="PF25390">
    <property type="entry name" value="WD40_RLD"/>
    <property type="match status" value="1"/>
</dbReference>
<dbReference type="PRINTS" id="PR00633">
    <property type="entry name" value="RCCNDNSATION"/>
</dbReference>
<dbReference type="SMART" id="SM00220">
    <property type="entry name" value="S_TKc"/>
    <property type="match status" value="1"/>
</dbReference>
<dbReference type="SUPFAM" id="SSF56112">
    <property type="entry name" value="Protein kinase-like (PK-like)"/>
    <property type="match status" value="1"/>
</dbReference>
<dbReference type="SUPFAM" id="SSF50985">
    <property type="entry name" value="RCC1/BLIP-II"/>
    <property type="match status" value="1"/>
</dbReference>
<dbReference type="PROSITE" id="PS50011">
    <property type="entry name" value="PROTEIN_KINASE_DOM"/>
    <property type="match status" value="1"/>
</dbReference>
<dbReference type="PROSITE" id="PS00108">
    <property type="entry name" value="PROTEIN_KINASE_ST"/>
    <property type="match status" value="1"/>
</dbReference>
<dbReference type="PROSITE" id="PS00626">
    <property type="entry name" value="RCC1_2"/>
    <property type="match status" value="1"/>
</dbReference>
<dbReference type="PROSITE" id="PS50012">
    <property type="entry name" value="RCC1_3"/>
    <property type="match status" value="6"/>
</dbReference>
<accession>Q7ZZC8</accession>
<feature type="chain" id="PRO_0000086437" description="Serine/threonine-protein kinase Nek9">
    <location>
        <begin position="1"/>
        <end position="944"/>
    </location>
</feature>
<feature type="domain" description="Protein kinase" evidence="3">
    <location>
        <begin position="34"/>
        <end position="290"/>
    </location>
</feature>
<feature type="repeat" description="RCC1 1">
    <location>
        <begin position="370"/>
        <end position="426"/>
    </location>
</feature>
<feature type="repeat" description="RCC1 2">
    <location>
        <begin position="427"/>
        <end position="480"/>
    </location>
</feature>
<feature type="repeat" description="RCC1 3">
    <location>
        <begin position="481"/>
        <end position="532"/>
    </location>
</feature>
<feature type="repeat" description="RCC1 4">
    <location>
        <begin position="533"/>
        <end position="597"/>
    </location>
</feature>
<feature type="repeat" description="RCC1 5">
    <location>
        <begin position="598"/>
        <end position="650"/>
    </location>
</feature>
<feature type="repeat" description="RCC1 6">
    <location>
        <begin position="651"/>
        <end position="708"/>
    </location>
</feature>
<feature type="region of interest" description="Disordered" evidence="5">
    <location>
        <begin position="726"/>
        <end position="782"/>
    </location>
</feature>
<feature type="region of interest" description="Disordered" evidence="5">
    <location>
        <begin position="794"/>
        <end position="825"/>
    </location>
</feature>
<feature type="region of interest" description="Disordered" evidence="5">
    <location>
        <begin position="906"/>
        <end position="925"/>
    </location>
</feature>
<feature type="coiled-coil region" evidence="2">
    <location>
        <begin position="835"/>
        <end position="890"/>
    </location>
</feature>
<feature type="compositionally biased region" description="Basic and acidic residues" evidence="5">
    <location>
        <begin position="738"/>
        <end position="748"/>
    </location>
</feature>
<feature type="compositionally biased region" description="Polar residues" evidence="5">
    <location>
        <begin position="768"/>
        <end position="781"/>
    </location>
</feature>
<feature type="compositionally biased region" description="Polar residues" evidence="5">
    <location>
        <begin position="801"/>
        <end position="816"/>
    </location>
</feature>
<feature type="active site" description="Proton acceptor" evidence="3 4">
    <location>
        <position position="158"/>
    </location>
</feature>
<feature type="binding site" evidence="3">
    <location>
        <begin position="40"/>
        <end position="48"/>
    </location>
    <ligand>
        <name>ATP</name>
        <dbReference type="ChEBI" id="CHEBI:30616"/>
    </ligand>
</feature>
<feature type="binding site" evidence="3">
    <location>
        <position position="63"/>
    </location>
    <ligand>
        <name>ATP</name>
        <dbReference type="ChEBI" id="CHEBI:30616"/>
    </ligand>
</feature>
<feature type="modified residue" description="Phosphothreonine; by autocatalysis" evidence="1">
    <location>
        <position position="192"/>
    </location>
</feature>
<comment type="function">
    <text evidence="1">Pleiotropic regulator of mitotic progression, participating in the control of spindle dynamics and chromosome separation. Important for G1/S transition and S phase progression. Phosphorylates nek6 and nek7 and stimulates their activity.</text>
</comment>
<comment type="catalytic activity">
    <reaction evidence="1">
        <text>L-seryl-[protein] + ATP = O-phospho-L-seryl-[protein] + ADP + H(+)</text>
        <dbReference type="Rhea" id="RHEA:17989"/>
        <dbReference type="Rhea" id="RHEA-COMP:9863"/>
        <dbReference type="Rhea" id="RHEA-COMP:11604"/>
        <dbReference type="ChEBI" id="CHEBI:15378"/>
        <dbReference type="ChEBI" id="CHEBI:29999"/>
        <dbReference type="ChEBI" id="CHEBI:30616"/>
        <dbReference type="ChEBI" id="CHEBI:83421"/>
        <dbReference type="ChEBI" id="CHEBI:456216"/>
        <dbReference type="EC" id="2.7.11.1"/>
    </reaction>
    <physiologicalReaction direction="left-to-right" evidence="1">
        <dbReference type="Rhea" id="RHEA:17990"/>
    </physiologicalReaction>
</comment>
<comment type="catalytic activity">
    <reaction evidence="1">
        <text>L-threonyl-[protein] + ATP = O-phospho-L-threonyl-[protein] + ADP + H(+)</text>
        <dbReference type="Rhea" id="RHEA:46608"/>
        <dbReference type="Rhea" id="RHEA-COMP:11060"/>
        <dbReference type="Rhea" id="RHEA-COMP:11605"/>
        <dbReference type="ChEBI" id="CHEBI:15378"/>
        <dbReference type="ChEBI" id="CHEBI:30013"/>
        <dbReference type="ChEBI" id="CHEBI:30616"/>
        <dbReference type="ChEBI" id="CHEBI:61977"/>
        <dbReference type="ChEBI" id="CHEBI:456216"/>
        <dbReference type="EC" id="2.7.11.1"/>
    </reaction>
    <physiologicalReaction direction="left-to-right" evidence="1">
        <dbReference type="Rhea" id="RHEA:46609"/>
    </physiologicalReaction>
</comment>
<comment type="cofactor">
    <cofactor evidence="1">
        <name>Mg(2+)</name>
        <dbReference type="ChEBI" id="CHEBI:18420"/>
    </cofactor>
</comment>
<comment type="subunit">
    <text evidence="1">Homodimer.</text>
</comment>
<comment type="subcellular location">
    <subcellularLocation>
        <location evidence="1">Cytoplasm</location>
    </subcellularLocation>
</comment>
<comment type="domain">
    <text evidence="1">Dimerizes through its coiled-coil domain.</text>
</comment>
<comment type="PTM">
    <text evidence="1">Autophosphorylated on serine and threonine residues.</text>
</comment>
<comment type="similarity">
    <text evidence="7">Belongs to the protein kinase superfamily. NEK Ser/Thr protein kinase family. NIMA subfamily.</text>
</comment>
<organism>
    <name type="scientific">Xenopus laevis</name>
    <name type="common">African clawed frog</name>
    <dbReference type="NCBI Taxonomy" id="8355"/>
    <lineage>
        <taxon>Eukaryota</taxon>
        <taxon>Metazoa</taxon>
        <taxon>Chordata</taxon>
        <taxon>Craniata</taxon>
        <taxon>Vertebrata</taxon>
        <taxon>Euteleostomi</taxon>
        <taxon>Amphibia</taxon>
        <taxon>Batrachia</taxon>
        <taxon>Anura</taxon>
        <taxon>Pipoidea</taxon>
        <taxon>Pipidae</taxon>
        <taxon>Xenopodinae</taxon>
        <taxon>Xenopus</taxon>
        <taxon>Xenopus</taxon>
    </lineage>
</organism>
<reference key="1">
    <citation type="journal article" date="2002" name="Genes Dev.">
        <title>Nercc1, a mammalian NIMA-family kinase, binds the Ran GTPase and regulates mitotic progression.</title>
        <authorList>
            <person name="Roig J."/>
            <person name="Mikhailov A."/>
            <person name="Belham C."/>
            <person name="Avruch J."/>
        </authorList>
    </citation>
    <scope>NUCLEOTIDE SEQUENCE [MRNA]</scope>
</reference>
<sequence length="944" mass="104540">MSALGRYDRHCDSINSDFGDSVRSCGPEQEELHYIPIRVLGHGAYGEATLYRRTEDDSLVVWKEVGLARLSEKERRDALNEIVILSLLQHDNIIAYYNHFLDSNTLLIELEYCNGGNLFDKIVHQKAQLFQEETVLWYLFQIVSAVSCIHKAGILHRDIKTLNIFLTKANLIKLGDYGLAKQLSSEYSMAETCVGTLYYMSPEICQGVKYSFKSDIWAVGCVLYELLTLTRTFDATNPLNLCVKIVQGNWAVGLDNTVYTQELIEVVHACLEQDPEKRPTADEILERPILSWRRRDMEEKVSMLNRSNKKPRTGTVTEAPIAVVTSRSSEVYVWGGGKTTPQKLDVFKGGWRARQVCAGDAHFAVVTVEKELYTWVNMQGGSKLHGQLGHGDRASYRQPKHVEKLQGKSVQKVSCGSDFTVCITDEGQLYSFGSDYYGCLGVNQSAGSEVLEPLLVDFFLNEPVDQVSCGDSHIMALTRSKSVYSWGCGEYGRLGLDSEDDVYSPQKVEVQRGLCIVNVCCGSDGSFLLTLTGKVLACGLNEHNKLGLNQYTAGIINHEAFQEVPYTTSLTLAKQLSFYKIRSISPGRTHTAAIDERGRLLTFGSNKCGQLGVGDYRKHLGINLLGGPLGGKQVIRVSCGDEFTTAATADNHIFAWGNGGNGRLAMTPNERPQGSDICTSWPRPIFGSLHHVTDLSCRGWHTILIVEKVLNSKTIRSNSSGLSIGTLAQSCSSGGSGSREEDSDRESLTSDPSRGFRGTIEAEPETGPFNTTENMESSSCPSWLRQELEEAEFIPMPDTPNFVSAESSQNGTTSMQDVRETPPDALEKPSFQACTCSTLQEEVRKLQDLVSTYRHEQELLCRENSRLALEVQELNGKLQSAMQMNQVVNKHGEAIHQIQKQLSLHWKSSPPSSGNPEMSREDSDAESWCFLGTEACRSSSGTPM</sequence>
<protein>
    <recommendedName>
        <fullName evidence="7">Serine/threonine-protein kinase Nek9</fullName>
        <shortName>xNek9</shortName>
        <ecNumber evidence="1">2.7.11.1</ecNumber>
    </recommendedName>
    <alternativeName>
        <fullName evidence="6">Nercc1 kinase</fullName>
    </alternativeName>
    <alternativeName>
        <fullName>Never in mitosis A-related kinase 9</fullName>
        <shortName>NimA-related protein kinase 9</shortName>
    </alternativeName>
</protein>